<evidence type="ECO:0000255" key="1"/>
<evidence type="ECO:0000256" key="2">
    <source>
        <dbReference type="SAM" id="MobiDB-lite"/>
    </source>
</evidence>
<evidence type="ECO:0000269" key="3">
    <source>
    </source>
</evidence>
<evidence type="ECO:0000269" key="4">
    <source>
    </source>
</evidence>
<reference key="1">
    <citation type="journal article" date="2000" name="Anal. Chem.">
        <title>Peptide profiling of cells with multiple gene products: combining immunochemistry and MALDI mass spectrometry with on-plate microextraction.</title>
        <authorList>
            <person name="Li L."/>
            <person name="Romanova E.V."/>
            <person name="Rubakhin S.S."/>
            <person name="Alexeeva V."/>
            <person name="Weiss K.R."/>
            <person name="Vilim F.S."/>
            <person name="Sweedler J.V."/>
        </authorList>
    </citation>
    <scope>PROTEIN SEQUENCE</scope>
    <scope>PROTEOLYTIC PROCESSING</scope>
    <scope>TISSUE SPECIFICITY</scope>
    <scope>AMIDATION AT TRP-49; TRP-83; TRP-105; TRP-128; TRP-135; TRP-142; TRP-149; TRP-156 AND TRP-163</scope>
    <scope>MASS SPECTROMETRY</scope>
    <source>
        <tissue>Neuron</tissue>
    </source>
</reference>
<reference key="2">
    <citation type="journal article" date="1996" name="Peptides">
        <title>Purification, primary structure, and neuronal localization of cerebral peptide 1 from Aplysia.</title>
        <authorList>
            <person name="Phares G.A."/>
            <person name="Lloyd P.E."/>
        </authorList>
    </citation>
    <scope>PROTEIN SEQUENCE OF 87-99</scope>
    <scope>TISSUE SPECIFICITY</scope>
    <source>
        <tissue>Ganglion</tissue>
    </source>
</reference>
<feature type="signal peptide" evidence="1">
    <location>
        <begin position="1"/>
        <end position="20"/>
    </location>
</feature>
<feature type="propeptide" id="PRO_0000311887" description="Connecting peptide 1">
    <location>
        <begin position="21"/>
        <end position="43"/>
    </location>
</feature>
<feature type="peptide" id="PRO_0000311888" description="APGW-amide">
    <location>
        <begin position="46"/>
        <end position="49"/>
    </location>
</feature>
<feature type="propeptide" id="PRO_0000311889" description="Connecting peptide 2">
    <location>
        <begin position="53"/>
        <end position="77"/>
    </location>
</feature>
<feature type="peptide" id="PRO_0000311890" description="APGW-amide">
    <location>
        <begin position="80"/>
        <end position="83"/>
    </location>
</feature>
<feature type="peptide" id="PRO_0000044127" description="Cerebral peptide 1">
    <location>
        <begin position="87"/>
        <end position="99"/>
    </location>
</feature>
<feature type="peptide" id="PRO_0000311891" description="APGW-amide">
    <location>
        <begin position="102"/>
        <end position="105"/>
    </location>
</feature>
<feature type="propeptide" id="PRO_0000311892" description="Connecting peptide 4">
    <location>
        <begin position="109"/>
        <end position="122"/>
    </location>
</feature>
<feature type="peptide" id="PRO_0000311893" description="APGW-amide">
    <location>
        <begin position="125"/>
        <end position="128"/>
    </location>
</feature>
<feature type="peptide" id="PRO_0000311894" description="APGW-amide">
    <location>
        <begin position="132"/>
        <end position="135"/>
    </location>
</feature>
<feature type="peptide" id="PRO_0000311895" description="APGW-amide">
    <location>
        <begin position="139"/>
        <end position="142"/>
    </location>
</feature>
<feature type="peptide" id="PRO_0000311896" description="APGW-amide">
    <location>
        <begin position="146"/>
        <end position="149"/>
    </location>
</feature>
<feature type="peptide" id="PRO_0000311897" description="APGW-amide">
    <location>
        <begin position="153"/>
        <end position="156"/>
    </location>
</feature>
<feature type="peptide" id="PRO_0000311898" description="APGW-amide">
    <location>
        <begin position="160"/>
        <end position="163"/>
    </location>
</feature>
<feature type="propeptide" id="PRO_0000311899" description="Connecting peptide 5">
    <location>
        <begin position="167"/>
        <end position="191"/>
    </location>
</feature>
<feature type="peptide" id="PRO_0000311900" description="C-terminal peptide">
    <location>
        <begin position="194"/>
        <end position="209"/>
    </location>
</feature>
<feature type="region of interest" description="Disordered" evidence="2">
    <location>
        <begin position="21"/>
        <end position="56"/>
    </location>
</feature>
<feature type="region of interest" description="Disordered" evidence="2">
    <location>
        <begin position="98"/>
        <end position="169"/>
    </location>
</feature>
<feature type="compositionally biased region" description="Polar residues" evidence="2">
    <location>
        <begin position="21"/>
        <end position="39"/>
    </location>
</feature>
<feature type="modified residue" description="Tryptophan amide" evidence="3">
    <location>
        <position position="49"/>
    </location>
</feature>
<feature type="modified residue" description="Tryptophan amide" evidence="3">
    <location>
        <position position="83"/>
    </location>
</feature>
<feature type="modified residue" description="Tryptophan amide" evidence="3">
    <location>
        <position position="105"/>
    </location>
</feature>
<feature type="modified residue" description="Tryptophan amide" evidence="3">
    <location>
        <position position="128"/>
    </location>
</feature>
<feature type="modified residue" description="Tryptophan amide" evidence="3">
    <location>
        <position position="135"/>
    </location>
</feature>
<feature type="modified residue" description="Tryptophan amide" evidence="3">
    <location>
        <position position="142"/>
    </location>
</feature>
<feature type="modified residue" description="Tryptophan amide" evidence="3">
    <location>
        <position position="149"/>
    </location>
</feature>
<feature type="modified residue" description="Tryptophan amide" evidence="3">
    <location>
        <position position="156"/>
    </location>
</feature>
<feature type="modified residue" description="Tryptophan amide" evidence="3">
    <location>
        <position position="163"/>
    </location>
</feature>
<feature type="disulfide bond">
    <location>
        <begin position="172"/>
        <end position="197"/>
    </location>
</feature>
<proteinExistence type="evidence at protein level"/>
<sequence>MLLAKISVVVLLLAIDGTSSSESTDNVVLSSSPDSQKAATSRHKRAPGWGKRSSLNDEDLFADSDSAQELLDSVAALKRAPGWGKRFSGLMSEGSSLEAKRAPGWGKRGQEIDVDEDGSEQEKRAPGWGKRAPGWGKRAPGWGKRAPGWGKRAPGWGKRAPGWGKRSGGDYCETLEKMVDAYIYKAVEVDSRRLADCGSGEGTNEPFRK</sequence>
<keyword id="KW-0027">Amidation</keyword>
<keyword id="KW-0903">Direct protein sequencing</keyword>
<keyword id="KW-1015">Disulfide bond</keyword>
<keyword id="KW-0964">Secreted</keyword>
<keyword id="KW-0732">Signal</keyword>
<organism>
    <name type="scientific">Aplysia californica</name>
    <name type="common">California sea hare</name>
    <dbReference type="NCBI Taxonomy" id="6500"/>
    <lineage>
        <taxon>Eukaryota</taxon>
        <taxon>Metazoa</taxon>
        <taxon>Spiralia</taxon>
        <taxon>Lophotrochozoa</taxon>
        <taxon>Mollusca</taxon>
        <taxon>Gastropoda</taxon>
        <taxon>Heterobranchia</taxon>
        <taxon>Euthyneura</taxon>
        <taxon>Tectipleura</taxon>
        <taxon>Aplysiida</taxon>
        <taxon>Aplysioidea</taxon>
        <taxon>Aplysiidae</taxon>
        <taxon>Aplysia</taxon>
    </lineage>
</organism>
<comment type="function">
    <text>May function as a peptide transmitter.</text>
</comment>
<comment type="subunit">
    <text>Homodimer; disulfide-linked.</text>
</comment>
<comment type="subcellular location">
    <subcellularLocation>
        <location>Secreted</location>
    </subcellularLocation>
</comment>
<comment type="tissue specificity">
    <text evidence="3 4">Cerebral peptide 1 is expressed in the cerebral, pedal and buccal ganglia and B1 and B2 neurons. APGW-amide is expressed in buccal ganglia and several neurons.</text>
</comment>
<comment type="mass spectrometry">
    <molecule>Cerebral peptide 1</molecule>
</comment>
<accession>Q10998</accession>
<dbReference type="RefSeq" id="NP_001191561.1">
    <property type="nucleotide sequence ID" value="NM_001204632.1"/>
</dbReference>
<dbReference type="EnsemblMetazoa" id="NM_001204632.1">
    <property type="protein sequence ID" value="NP_001191561.1"/>
    <property type="gene ID" value="LOC100533336"/>
</dbReference>
<dbReference type="GeneID" id="100533336"/>
<dbReference type="OrthoDB" id="6063019at2759"/>
<dbReference type="Proteomes" id="UP000694888">
    <property type="component" value="Unplaced"/>
</dbReference>
<dbReference type="GO" id="GO:0005576">
    <property type="term" value="C:extracellular region"/>
    <property type="evidence" value="ECO:0007669"/>
    <property type="project" value="UniProtKB-SubCell"/>
</dbReference>
<protein>
    <recommendedName>
        <fullName>Cerebral peptide 1</fullName>
        <shortName>CP1</shortName>
    </recommendedName>
    <alternativeName>
        <fullName>Connecting peptide 3</fullName>
        <shortName>CP3</shortName>
    </alternativeName>
    <component>
        <recommendedName>
            <fullName>APGW-amide</fullName>
        </recommendedName>
    </component>
    <component>
        <recommendedName>
            <fullName>Cerebral peptide 1</fullName>
            <shortName>CP1</shortName>
        </recommendedName>
    </component>
    <component>
        <recommendedName>
            <fullName>C-terminal peptide</fullName>
            <shortName>CTP</shortName>
        </recommendedName>
    </component>
</protein>
<name>CP1_APLCA</name>